<feature type="chain" id="PRO_0000340857" description="Tetraacyldisaccharide 4'-kinase">
    <location>
        <begin position="1"/>
        <end position="339"/>
    </location>
</feature>
<feature type="binding site" evidence="1">
    <location>
        <begin position="58"/>
        <end position="65"/>
    </location>
    <ligand>
        <name>ATP</name>
        <dbReference type="ChEBI" id="CHEBI:30616"/>
    </ligand>
</feature>
<accession>A3D382</accession>
<evidence type="ECO:0000255" key="1">
    <source>
        <dbReference type="HAMAP-Rule" id="MF_00409"/>
    </source>
</evidence>
<reference key="1">
    <citation type="submission" date="2007-02" db="EMBL/GenBank/DDBJ databases">
        <title>Complete sequence of chromosome of Shewanella baltica OS155.</title>
        <authorList>
            <consortium name="US DOE Joint Genome Institute"/>
            <person name="Copeland A."/>
            <person name="Lucas S."/>
            <person name="Lapidus A."/>
            <person name="Barry K."/>
            <person name="Detter J.C."/>
            <person name="Glavina del Rio T."/>
            <person name="Hammon N."/>
            <person name="Israni S."/>
            <person name="Dalin E."/>
            <person name="Tice H."/>
            <person name="Pitluck S."/>
            <person name="Sims D.R."/>
            <person name="Brettin T."/>
            <person name="Bruce D."/>
            <person name="Han C."/>
            <person name="Tapia R."/>
            <person name="Brainard J."/>
            <person name="Schmutz J."/>
            <person name="Larimer F."/>
            <person name="Land M."/>
            <person name="Hauser L."/>
            <person name="Kyrpides N."/>
            <person name="Mikhailova N."/>
            <person name="Brettar I."/>
            <person name="Klappenbach J."/>
            <person name="Konstantinidis K."/>
            <person name="Rodrigues J."/>
            <person name="Tiedje J."/>
            <person name="Richardson P."/>
        </authorList>
    </citation>
    <scope>NUCLEOTIDE SEQUENCE [LARGE SCALE GENOMIC DNA]</scope>
    <source>
        <strain>OS155 / ATCC BAA-1091</strain>
    </source>
</reference>
<proteinExistence type="inferred from homology"/>
<comment type="function">
    <text evidence="1">Transfers the gamma-phosphate of ATP to the 4'-position of a tetraacyldisaccharide 1-phosphate intermediate (termed DS-1-P) to form tetraacyldisaccharide 1,4'-bis-phosphate (lipid IVA).</text>
</comment>
<comment type="catalytic activity">
    <reaction evidence="1">
        <text>a lipid A disaccharide + ATP = a lipid IVA + ADP + H(+)</text>
        <dbReference type="Rhea" id="RHEA:67840"/>
        <dbReference type="ChEBI" id="CHEBI:15378"/>
        <dbReference type="ChEBI" id="CHEBI:30616"/>
        <dbReference type="ChEBI" id="CHEBI:176343"/>
        <dbReference type="ChEBI" id="CHEBI:176425"/>
        <dbReference type="ChEBI" id="CHEBI:456216"/>
        <dbReference type="EC" id="2.7.1.130"/>
    </reaction>
</comment>
<comment type="pathway">
    <text evidence="1">Glycolipid biosynthesis; lipid IV(A) biosynthesis; lipid IV(A) from (3R)-3-hydroxytetradecanoyl-[acyl-carrier-protein] and UDP-N-acetyl-alpha-D-glucosamine: step 6/6.</text>
</comment>
<comment type="similarity">
    <text evidence="1">Belongs to the LpxK family.</text>
</comment>
<keyword id="KW-0067">ATP-binding</keyword>
<keyword id="KW-0418">Kinase</keyword>
<keyword id="KW-0441">Lipid A biosynthesis</keyword>
<keyword id="KW-0444">Lipid biosynthesis</keyword>
<keyword id="KW-0443">Lipid metabolism</keyword>
<keyword id="KW-0547">Nucleotide-binding</keyword>
<keyword id="KW-1185">Reference proteome</keyword>
<keyword id="KW-0808">Transferase</keyword>
<sequence length="339" mass="37022">MQALVNKIWYQGHPLRWLLLPLSWLFAVITYVRRALFRLGIKSQTAMPVPVIVVGNITVGGSGKTPTVIYLIELLRQHGFTPGVISRGYGVDIQGVKTVNLGASAAEVGDEPAMIVARTQVPMVVGAKRVDAANALIAEFGVDVIICDDGLQHYALGRDIELVVIDGQRGLGNGLLLPAGPLREGAWRLDAVDFIVNNGGPAAKGQFEMQLAPTEVKPVKCDVTSGEYSFDKSQPLVAMAGIGNPARFFESLRAQGYQLALCQGFDDHQAYDKTLLRDLAQDLPLLMTEKDAVKCRDFAQENWWYLAVNAKLSPQFDEQLLARLREVAAAKQGNFHGIR</sequence>
<organism>
    <name type="scientific">Shewanella baltica (strain OS155 / ATCC BAA-1091)</name>
    <dbReference type="NCBI Taxonomy" id="325240"/>
    <lineage>
        <taxon>Bacteria</taxon>
        <taxon>Pseudomonadati</taxon>
        <taxon>Pseudomonadota</taxon>
        <taxon>Gammaproteobacteria</taxon>
        <taxon>Alteromonadales</taxon>
        <taxon>Shewanellaceae</taxon>
        <taxon>Shewanella</taxon>
    </lineage>
</organism>
<protein>
    <recommendedName>
        <fullName evidence="1">Tetraacyldisaccharide 4'-kinase</fullName>
        <ecNumber evidence="1">2.7.1.130</ecNumber>
    </recommendedName>
    <alternativeName>
        <fullName evidence="1">Lipid A 4'-kinase</fullName>
    </alternativeName>
</protein>
<gene>
    <name evidence="1" type="primary">lpxK</name>
    <name type="ordered locus">Sbal_1684</name>
</gene>
<dbReference type="EC" id="2.7.1.130" evidence="1"/>
<dbReference type="EMBL" id="CP000563">
    <property type="protein sequence ID" value="ABN61195.1"/>
    <property type="molecule type" value="Genomic_DNA"/>
</dbReference>
<dbReference type="RefSeq" id="WP_011846513.1">
    <property type="nucleotide sequence ID" value="NC_009052.1"/>
</dbReference>
<dbReference type="SMR" id="A3D382"/>
<dbReference type="STRING" id="325240.Sbal_1684"/>
<dbReference type="KEGG" id="sbl:Sbal_1684"/>
<dbReference type="HOGENOM" id="CLU_038816_2_0_6"/>
<dbReference type="OrthoDB" id="9766423at2"/>
<dbReference type="UniPathway" id="UPA00359">
    <property type="reaction ID" value="UER00482"/>
</dbReference>
<dbReference type="Proteomes" id="UP000001557">
    <property type="component" value="Chromosome"/>
</dbReference>
<dbReference type="GO" id="GO:0005886">
    <property type="term" value="C:plasma membrane"/>
    <property type="evidence" value="ECO:0007669"/>
    <property type="project" value="TreeGrafter"/>
</dbReference>
<dbReference type="GO" id="GO:0005524">
    <property type="term" value="F:ATP binding"/>
    <property type="evidence" value="ECO:0007669"/>
    <property type="project" value="UniProtKB-UniRule"/>
</dbReference>
<dbReference type="GO" id="GO:0009029">
    <property type="term" value="F:tetraacyldisaccharide 4'-kinase activity"/>
    <property type="evidence" value="ECO:0007669"/>
    <property type="project" value="UniProtKB-UniRule"/>
</dbReference>
<dbReference type="GO" id="GO:0009245">
    <property type="term" value="P:lipid A biosynthetic process"/>
    <property type="evidence" value="ECO:0007669"/>
    <property type="project" value="UniProtKB-UniRule"/>
</dbReference>
<dbReference type="GO" id="GO:0009244">
    <property type="term" value="P:lipopolysaccharide core region biosynthetic process"/>
    <property type="evidence" value="ECO:0007669"/>
    <property type="project" value="TreeGrafter"/>
</dbReference>
<dbReference type="HAMAP" id="MF_00409">
    <property type="entry name" value="LpxK"/>
    <property type="match status" value="1"/>
</dbReference>
<dbReference type="InterPro" id="IPR003758">
    <property type="entry name" value="LpxK"/>
</dbReference>
<dbReference type="InterPro" id="IPR027417">
    <property type="entry name" value="P-loop_NTPase"/>
</dbReference>
<dbReference type="NCBIfam" id="TIGR00682">
    <property type="entry name" value="lpxK"/>
    <property type="match status" value="1"/>
</dbReference>
<dbReference type="PANTHER" id="PTHR42724">
    <property type="entry name" value="TETRAACYLDISACCHARIDE 4'-KINASE"/>
    <property type="match status" value="1"/>
</dbReference>
<dbReference type="PANTHER" id="PTHR42724:SF1">
    <property type="entry name" value="TETRAACYLDISACCHARIDE 4'-KINASE, MITOCHONDRIAL-RELATED"/>
    <property type="match status" value="1"/>
</dbReference>
<dbReference type="Pfam" id="PF02606">
    <property type="entry name" value="LpxK"/>
    <property type="match status" value="1"/>
</dbReference>
<dbReference type="SUPFAM" id="SSF52540">
    <property type="entry name" value="P-loop containing nucleoside triphosphate hydrolases"/>
    <property type="match status" value="1"/>
</dbReference>
<name>LPXK_SHEB5</name>